<accession>P49427</accession>
<accession>A8K689</accession>
<protein>
    <recommendedName>
        <fullName>Ubiquitin-conjugating enzyme E2 R1</fullName>
        <ecNumber evidence="14 19 24 25 28">2.3.2.23</ecNumber>
    </recommendedName>
    <alternativeName>
        <fullName>(E3-independent) E2 ubiquitin-conjugating enzyme R1</fullName>
        <ecNumber evidence="18">2.3.2.24</ecNumber>
    </alternativeName>
    <alternativeName>
        <fullName>E2 ubiquitin-conjugating enzyme R1</fullName>
    </alternativeName>
    <alternativeName>
        <fullName>Ubiquitin-conjugating enzyme E2-32 kDa complementing</fullName>
    </alternativeName>
    <alternativeName>
        <fullName>Ubiquitin-conjugating enzyme E2-CDC34</fullName>
    </alternativeName>
    <alternativeName>
        <fullName>Ubiquitin-protein ligase R1</fullName>
    </alternativeName>
</protein>
<proteinExistence type="evidence at protein level"/>
<reference key="1">
    <citation type="journal article" date="1993" name="Proc. Natl. Acad. Sci. U.S.A.">
        <title>Cloning of the human homolog of the CDC34 cell cycle gene by complementation in yeast.</title>
        <authorList>
            <person name="Plon S.E."/>
            <person name="Leppig K.A."/>
            <person name="Do H.N."/>
            <person name="Groudine M."/>
        </authorList>
    </citation>
    <scope>NUCLEOTIDE SEQUENCE [MRNA]</scope>
</reference>
<reference key="2">
    <citation type="submission" date="2003-05" db="EMBL/GenBank/DDBJ databases">
        <title>Cloning of human full-length CDSs in BD Creator(TM) system donor vector.</title>
        <authorList>
            <person name="Kalnine N."/>
            <person name="Chen X."/>
            <person name="Rolfs A."/>
            <person name="Halleck A."/>
            <person name="Hines L."/>
            <person name="Eisenstein S."/>
            <person name="Koundinya M."/>
            <person name="Raphael J."/>
            <person name="Moreira D."/>
            <person name="Kelley T."/>
            <person name="LaBaer J."/>
            <person name="Lin Y."/>
            <person name="Phelan M."/>
            <person name="Farmer A."/>
        </authorList>
    </citation>
    <scope>NUCLEOTIDE SEQUENCE [LARGE SCALE MRNA]</scope>
</reference>
<reference key="3">
    <citation type="submission" date="2004-06" db="EMBL/GenBank/DDBJ databases">
        <authorList>
            <consortium name="NIEHS SNPs program"/>
        </authorList>
    </citation>
    <scope>NUCLEOTIDE SEQUENCE [GENOMIC DNA]</scope>
    <scope>VARIANT HIS-227</scope>
</reference>
<reference key="4">
    <citation type="journal article" date="2004" name="Nat. Genet.">
        <title>Complete sequencing and characterization of 21,243 full-length human cDNAs.</title>
        <authorList>
            <person name="Ota T."/>
            <person name="Suzuki Y."/>
            <person name="Nishikawa T."/>
            <person name="Otsuki T."/>
            <person name="Sugiyama T."/>
            <person name="Irie R."/>
            <person name="Wakamatsu A."/>
            <person name="Hayashi K."/>
            <person name="Sato H."/>
            <person name="Nagai K."/>
            <person name="Kimura K."/>
            <person name="Makita H."/>
            <person name="Sekine M."/>
            <person name="Obayashi M."/>
            <person name="Nishi T."/>
            <person name="Shibahara T."/>
            <person name="Tanaka T."/>
            <person name="Ishii S."/>
            <person name="Yamamoto J."/>
            <person name="Saito K."/>
            <person name="Kawai Y."/>
            <person name="Isono Y."/>
            <person name="Nakamura Y."/>
            <person name="Nagahari K."/>
            <person name="Murakami K."/>
            <person name="Yasuda T."/>
            <person name="Iwayanagi T."/>
            <person name="Wagatsuma M."/>
            <person name="Shiratori A."/>
            <person name="Sudo H."/>
            <person name="Hosoiri T."/>
            <person name="Kaku Y."/>
            <person name="Kodaira H."/>
            <person name="Kondo H."/>
            <person name="Sugawara M."/>
            <person name="Takahashi M."/>
            <person name="Kanda K."/>
            <person name="Yokoi T."/>
            <person name="Furuya T."/>
            <person name="Kikkawa E."/>
            <person name="Omura Y."/>
            <person name="Abe K."/>
            <person name="Kamihara K."/>
            <person name="Katsuta N."/>
            <person name="Sato K."/>
            <person name="Tanikawa M."/>
            <person name="Yamazaki M."/>
            <person name="Ninomiya K."/>
            <person name="Ishibashi T."/>
            <person name="Yamashita H."/>
            <person name="Murakawa K."/>
            <person name="Fujimori K."/>
            <person name="Tanai H."/>
            <person name="Kimata M."/>
            <person name="Watanabe M."/>
            <person name="Hiraoka S."/>
            <person name="Chiba Y."/>
            <person name="Ishida S."/>
            <person name="Ono Y."/>
            <person name="Takiguchi S."/>
            <person name="Watanabe S."/>
            <person name="Yosida M."/>
            <person name="Hotuta T."/>
            <person name="Kusano J."/>
            <person name="Kanehori K."/>
            <person name="Takahashi-Fujii A."/>
            <person name="Hara H."/>
            <person name="Tanase T.-O."/>
            <person name="Nomura Y."/>
            <person name="Togiya S."/>
            <person name="Komai F."/>
            <person name="Hara R."/>
            <person name="Takeuchi K."/>
            <person name="Arita M."/>
            <person name="Imose N."/>
            <person name="Musashino K."/>
            <person name="Yuuki H."/>
            <person name="Oshima A."/>
            <person name="Sasaki N."/>
            <person name="Aotsuka S."/>
            <person name="Yoshikawa Y."/>
            <person name="Matsunawa H."/>
            <person name="Ichihara T."/>
            <person name="Shiohata N."/>
            <person name="Sano S."/>
            <person name="Moriya S."/>
            <person name="Momiyama H."/>
            <person name="Satoh N."/>
            <person name="Takami S."/>
            <person name="Terashima Y."/>
            <person name="Suzuki O."/>
            <person name="Nakagawa S."/>
            <person name="Senoh A."/>
            <person name="Mizoguchi H."/>
            <person name="Goto Y."/>
            <person name="Shimizu F."/>
            <person name="Wakebe H."/>
            <person name="Hishigaki H."/>
            <person name="Watanabe T."/>
            <person name="Sugiyama A."/>
            <person name="Takemoto M."/>
            <person name="Kawakami B."/>
            <person name="Yamazaki M."/>
            <person name="Watanabe K."/>
            <person name="Kumagai A."/>
            <person name="Itakura S."/>
            <person name="Fukuzumi Y."/>
            <person name="Fujimori Y."/>
            <person name="Komiyama M."/>
            <person name="Tashiro H."/>
            <person name="Tanigami A."/>
            <person name="Fujiwara T."/>
            <person name="Ono T."/>
            <person name="Yamada K."/>
            <person name="Fujii Y."/>
            <person name="Ozaki K."/>
            <person name="Hirao M."/>
            <person name="Ohmori Y."/>
            <person name="Kawabata A."/>
            <person name="Hikiji T."/>
            <person name="Kobatake N."/>
            <person name="Inagaki H."/>
            <person name="Ikema Y."/>
            <person name="Okamoto S."/>
            <person name="Okitani R."/>
            <person name="Kawakami T."/>
            <person name="Noguchi S."/>
            <person name="Itoh T."/>
            <person name="Shigeta K."/>
            <person name="Senba T."/>
            <person name="Matsumura K."/>
            <person name="Nakajima Y."/>
            <person name="Mizuno T."/>
            <person name="Morinaga M."/>
            <person name="Sasaki M."/>
            <person name="Togashi T."/>
            <person name="Oyama M."/>
            <person name="Hata H."/>
            <person name="Watanabe M."/>
            <person name="Komatsu T."/>
            <person name="Mizushima-Sugano J."/>
            <person name="Satoh T."/>
            <person name="Shirai Y."/>
            <person name="Takahashi Y."/>
            <person name="Nakagawa K."/>
            <person name="Okumura K."/>
            <person name="Nagase T."/>
            <person name="Nomura N."/>
            <person name="Kikuchi H."/>
            <person name="Masuho Y."/>
            <person name="Yamashita R."/>
            <person name="Nakai K."/>
            <person name="Yada T."/>
            <person name="Nakamura Y."/>
            <person name="Ohara O."/>
            <person name="Isogai T."/>
            <person name="Sugano S."/>
        </authorList>
    </citation>
    <scope>NUCLEOTIDE SEQUENCE [LARGE SCALE MRNA]</scope>
    <source>
        <tissue>Placenta</tissue>
    </source>
</reference>
<reference key="5">
    <citation type="submission" date="2005-07" db="EMBL/GenBank/DDBJ databases">
        <authorList>
            <person name="Mural R.J."/>
            <person name="Istrail S."/>
            <person name="Sutton G.G."/>
            <person name="Florea L."/>
            <person name="Halpern A.L."/>
            <person name="Mobarry C.M."/>
            <person name="Lippert R."/>
            <person name="Walenz B."/>
            <person name="Shatkay H."/>
            <person name="Dew I."/>
            <person name="Miller J.R."/>
            <person name="Flanigan M.J."/>
            <person name="Edwards N.J."/>
            <person name="Bolanos R."/>
            <person name="Fasulo D."/>
            <person name="Halldorsson B.V."/>
            <person name="Hannenhalli S."/>
            <person name="Turner R."/>
            <person name="Yooseph S."/>
            <person name="Lu F."/>
            <person name="Nusskern D.R."/>
            <person name="Shue B.C."/>
            <person name="Zheng X.H."/>
            <person name="Zhong F."/>
            <person name="Delcher A.L."/>
            <person name="Huson D.H."/>
            <person name="Kravitz S.A."/>
            <person name="Mouchard L."/>
            <person name="Reinert K."/>
            <person name="Remington K.A."/>
            <person name="Clark A.G."/>
            <person name="Waterman M.S."/>
            <person name="Eichler E.E."/>
            <person name="Adams M.D."/>
            <person name="Hunkapiller M.W."/>
            <person name="Myers E.W."/>
            <person name="Venter J.C."/>
        </authorList>
    </citation>
    <scope>NUCLEOTIDE SEQUENCE [LARGE SCALE GENOMIC DNA]</scope>
</reference>
<reference key="6">
    <citation type="journal article" date="2004" name="Genome Res.">
        <title>The status, quality, and expansion of the NIH full-length cDNA project: the Mammalian Gene Collection (MGC).</title>
        <authorList>
            <consortium name="The MGC Project Team"/>
        </authorList>
    </citation>
    <scope>NUCLEOTIDE SEQUENCE [LARGE SCALE MRNA]</scope>
    <source>
        <tissue>Brain</tissue>
        <tissue>Lung</tissue>
    </source>
</reference>
<reference key="7">
    <citation type="journal article" date="1999" name="J. Biol. Chem.">
        <title>Identification of the ubiquitin carrier proteins, E2s, involved in signal-induced conjugation and subsequent degradation of IkappaBalpha.</title>
        <authorList>
            <person name="Gonen H."/>
            <person name="Bercovich B."/>
            <person name="Orian A."/>
            <person name="Carrano A."/>
            <person name="Takizawa C."/>
            <person name="Yamanaka K."/>
            <person name="Pagano M."/>
            <person name="Iwai K."/>
            <person name="Ciechanover A."/>
        </authorList>
    </citation>
    <scope>FUNCTION</scope>
    <scope>MUTAGENESIS OF CYS-93</scope>
</reference>
<reference key="8">
    <citation type="journal article" date="1999" name="Mol. Cell. Biol.">
        <title>Human Cdc34 and Rad6B ubiquitin-conjugating enzymes target repressors of cyclic AMP-induced transcription for proteolysis.</title>
        <authorList>
            <person name="Pati D."/>
            <person name="Meistrich M.L."/>
            <person name="Plon S.E."/>
        </authorList>
    </citation>
    <scope>FUNCTION</scope>
    <scope>TISSUE SPECIFICITY</scope>
</reference>
<reference key="9">
    <citation type="journal article" date="2000" name="J. Cell Sci.">
        <title>Association of human ubiquitin-conjugating enzyme CDC34 with the mitotic spindle in anaphase.</title>
        <authorList>
            <person name="Reymond F."/>
            <person name="Wirbelauer C."/>
            <person name="Krek W."/>
        </authorList>
    </citation>
    <scope>SUBCELLULAR LOCATION</scope>
    <scope>DOMAIN</scope>
</reference>
<reference key="10">
    <citation type="journal article" date="2000" name="Oncogene">
        <title>Degradation of B-Myb by ubiquitin-mediated proteolysis: involvement of the Cdc34-SCF(p45Skp2) pathway.</title>
        <authorList>
            <person name="Charrasse S."/>
            <person name="Carena I."/>
            <person name="Brondani V."/>
            <person name="Klempnauer K.H."/>
            <person name="Ferrari S."/>
        </authorList>
    </citation>
    <scope>FUNCTION</scope>
</reference>
<reference key="11">
    <citation type="journal article" date="2000" name="Oncogene">
        <title>SCF(beta-TRCP) and phosphorylation dependent ubiquitination of I kappa B alpha catalyzed by Ubc3 and Ubc4.</title>
        <authorList>
            <person name="Strack P."/>
            <person name="Caligiuri M."/>
            <person name="Pelletier M."/>
            <person name="Boisclair M."/>
            <person name="Theodoras A."/>
            <person name="Beer-Romero P."/>
            <person name="Glass S."/>
            <person name="Parsons T."/>
            <person name="Copeland R.A."/>
            <person name="Auger K.R."/>
            <person name="Benfield P."/>
            <person name="Brizuela L."/>
            <person name="Rolfe M."/>
        </authorList>
    </citation>
    <scope>INTERACTION WITH SCF COMPLEX</scope>
</reference>
<reference key="12">
    <citation type="journal article" date="2001" name="J. Biol. Chem.">
        <title>Phosphorylation of the human ubiquitin-conjugating enzyme, CDC34, by casein kinase 2.</title>
        <authorList>
            <person name="Block K."/>
            <person name="Boyer T.G."/>
            <person name="Yew P.R."/>
        </authorList>
    </citation>
    <scope>INTERACTION WITH CSNK2B</scope>
    <scope>PHOSPHORYLATION AT SER-203; SER-222; SER-231; THR-233 AND SER-236</scope>
    <scope>MUTAGENESIS OF SER-203; SER-222; SER-231; THR-233 AND SER-236</scope>
    <scope>SUBCELLULAR LOCATION</scope>
</reference>
<reference key="13">
    <citation type="journal article" date="2001" name="Proc. Natl. Acad. Sci. U.S.A.">
        <title>The infected cell protein 0 of herpes simplex virus 1 dynamically interacts with proteasomes, binds and activates the cdc34 E2 ubiquitin-conjugating enzyme, and possesses in vitro E3 ubiquitin ligase activity.</title>
        <authorList>
            <person name="Van Sant C."/>
            <person name="Hagglund R."/>
            <person name="Lopez P."/>
            <person name="Roizman B."/>
        </authorList>
    </citation>
    <scope>INTERACTION WITH HUMAN HERPESVIRUS 1 PROTEIN ICP0</scope>
    <scope>ASSOCIATION WITH THE PROTEASOME</scope>
</reference>
<reference key="14">
    <citation type="journal article" date="2002" name="J. Biol. Chem.">
        <title>The Nedd8-conjugated ROC1-CUL1 core ubiquitin ligase utilizes Nedd8 charged surface residues for efficient polyubiquitin chain assembly catalyzed by Cdc34.</title>
        <authorList>
            <person name="Wu K."/>
            <person name="Chen A."/>
            <person name="Tan P."/>
            <person name="Pan Z.Q."/>
        </authorList>
    </citation>
    <scope>INTERACTION WITH SCF COMPLEX</scope>
    <scope>FUNCTION</scope>
    <scope>ACTIVITY REGULATION</scope>
</reference>
<reference key="15">
    <citation type="journal article" date="2002" name="Oncogene">
        <title>CK2-dependent phosphorylation of the E2 ubiquitin conjugating enzyme UBC3B induces its interaction with beta-TrCP and enhances beta-catenin degradation.</title>
        <authorList>
            <person name="Semplici F."/>
            <person name="Meggio F."/>
            <person name="Pinna L.A."/>
            <person name="Oliviero S."/>
        </authorList>
    </citation>
    <scope>CATALYTIC ACTIVITY</scope>
    <scope>FUNCTION</scope>
    <scope>INTERACTION WITH BTRC</scope>
    <scope>PHOSPHORYLATION AT SER-231</scope>
    <scope>MUTAGENESIS OF CYS-93; LEU-97 AND SER-231</scope>
</reference>
<reference key="16">
    <citation type="journal article" date="2002" name="Proc. Natl. Acad. Sci. U.S.A.">
        <title>Herpes simplex virus 1-infected cell protein 0 contains two E3 ubiquitin ligase sites specific for different E2 ubiquitin-conjugating enzymes.</title>
        <authorList>
            <person name="Hagglund R."/>
            <person name="Van Sant C."/>
            <person name="Lopez P."/>
            <person name="Roizman B."/>
        </authorList>
    </citation>
    <scope>INTERACTION WITH HUMAN HERPES VIRUS 1 PROTEIN ICP0</scope>
    <scope>AUTOUBIQUITINATION</scope>
</reference>
<reference key="17">
    <citation type="journal article" date="2002" name="Proc. Natl. Acad. Sci. U.S.A.">
        <title>Characterization of the novel E3 ubiquitin ligase encoded in exon 3 of herpes simplex virus-1-infected cell protein 0.</title>
        <authorList>
            <person name="Hagglund R."/>
            <person name="Roizman B."/>
        </authorList>
    </citation>
    <scope>INTERACTION WITH HUMAN HERPES VIRUS 1 PROTEIN ICP0</scope>
    <scope>AUTOUBIQUITINATION</scope>
</reference>
<reference key="18">
    <citation type="journal article" date="2005" name="Exp. Cell Res.">
        <title>The human ubiquitin-conjugating enzyme Cdc34 controls cellular proliferation through regulation of p27Kip1 protein levels.</title>
        <authorList>
            <person name="Butz N."/>
            <person name="Ruetz S."/>
            <person name="Natt F."/>
            <person name="Hall J."/>
            <person name="Weiler J."/>
            <person name="Mestan J."/>
            <person name="Ducarre M."/>
            <person name="Grossenbacher R."/>
            <person name="Hauser P."/>
            <person name="Kempf D."/>
            <person name="Hofmann F."/>
        </authorList>
    </citation>
    <scope>FUNCTION</scope>
</reference>
<reference key="19">
    <citation type="journal article" date="2007" name="Biochem. J.">
        <title>Cdc34 C-terminal tail phosphorylation regulates Skp1/cullin/F-box (SCF)-mediated ubiquitination and cell cycle progression.</title>
        <authorList>
            <person name="Sadowski M."/>
            <person name="Mawson A."/>
            <person name="Baker R."/>
            <person name="Sarcevic B."/>
        </authorList>
    </citation>
    <scope>PHOSPHORYLATION AT SER-203; SER-222 AND SER-231</scope>
    <scope>FUNCTION</scope>
</reference>
<reference key="20">
    <citation type="journal article" date="2007" name="Mol. Cell">
        <title>E3-independent monoubiquitination of ubiquitin-binding proteins.</title>
        <authorList>
            <person name="Hoeller D."/>
            <person name="Hecker C.M."/>
            <person name="Wagner S."/>
            <person name="Rogov V."/>
            <person name="Doetsch V."/>
            <person name="Dikic I."/>
        </authorList>
    </citation>
    <scope>CATALYTIC ACTIVITY AS E3-INDEPENDENT E2 UBIQUITIN-CONJUGATING ENZYME</scope>
</reference>
<reference key="21">
    <citation type="journal article" date="2007" name="Mol. Cell. Biol.">
        <title>Human Cdc34 employs distinct sites to coordinate attachment of ubiquitin to a substrate and assembly of polyubiquitin chains.</title>
        <authorList>
            <person name="Gazdoiu S."/>
            <person name="Yamoah K."/>
            <person name="Wu K."/>
            <person name="Pan Z.Q."/>
        </authorList>
    </citation>
    <scope>FUNCTION</scope>
    <scope>CATALYTIC ACTIVITY</scope>
    <scope>MUTAGENESIS OF ASN-85; TYR-87; SER-95; ASP-102; ASP-103; GLU-108; GLU-112; SER-138; ASP-143; MET-147; ARG-149; LYS-150 AND GLU-153</scope>
</reference>
<reference key="22">
    <citation type="journal article" date="2008" name="Mol. Cell">
        <title>Multimodal activation of the ubiquitin ligase SCF by Nedd8 conjugation.</title>
        <authorList>
            <person name="Saha A."/>
            <person name="Deshaies R.J."/>
        </authorList>
    </citation>
    <scope>INTERACTION WITH SCF COMPLEX</scope>
</reference>
<reference key="23">
    <citation type="journal article" date="2009" name="Cell">
        <title>Rapid E2-E3 assembly and disassembly enable processive ubiquitylation of cullin-RING ubiquitin ligase substrates.</title>
        <authorList>
            <person name="Kleiger G."/>
            <person name="Saha A."/>
            <person name="Lewis S."/>
            <person name="Kuhlman B."/>
            <person name="Deshaies R.J."/>
        </authorList>
    </citation>
    <scope>FUNCTION</scope>
    <scope>INTERACTION WITH SCF COMPLEX</scope>
    <scope>DOMAIN</scope>
    <scope>BIOPHYSICOCHEMICAL PROPERTIES</scope>
</reference>
<reference key="24">
    <citation type="journal article" date="2009" name="J. Biol. Chem.">
        <title>Histidine triad nucleotide-binding protein 1 up-regulates cellular levels of p27KIP1 by targeting ScfSKP2 ubiquitin ligase and Src.</title>
        <authorList>
            <person name="Cen B."/>
            <person name="Li H."/>
            <person name="Weinstein I.B."/>
        </authorList>
    </citation>
    <scope>IDENTIFICATION IN A UBIQUITIN LIGASE COMPLEX WITH HINT1 AND RBX1</scope>
    <scope>FUNCTION</scope>
</reference>
<reference key="25">
    <citation type="journal article" date="2009" name="J. Biol. Chem.">
        <title>let-7 Overexpression leads to an increased fraction of cells in G2/M, direct down-regulation of Cdc34, and stabilization of Wee1 kinase in primary fibroblasts.</title>
        <authorList>
            <person name="Legesse-Miller A."/>
            <person name="Elemento O."/>
            <person name="Pfau S.J."/>
            <person name="Forman J.J."/>
            <person name="Tavazoie S."/>
            <person name="Coller H.A."/>
        </authorList>
    </citation>
    <scope>INDUCTION</scope>
    <scope>FUNCTION</scope>
</reference>
<reference key="26">
    <citation type="journal article" date="2010" name="J. Biol. Chem.">
        <title>The E2 ubiquitin-conjugating enzymes direct polyubiquitination to preferred lysines.</title>
        <authorList>
            <person name="David Y."/>
            <person name="Ziv T."/>
            <person name="Admon A."/>
            <person name="Navon A."/>
        </authorList>
    </citation>
    <scope>FUNCTION</scope>
    <scope>CATALYTIC ACTIVITY</scope>
</reference>
<reference key="27">
    <citation type="journal article" date="2010" name="Mol. Cell">
        <title>Priming and extending: a UbcH5/Cdc34 E2 handoff mechanism for polyubiquitination on a SCF substrate.</title>
        <authorList>
            <person name="Wu K."/>
            <person name="Kovacev J."/>
            <person name="Pan Z.Q."/>
        </authorList>
    </citation>
    <scope>FUNCTION</scope>
    <scope>CATALYTIC ACTIVITY</scope>
</reference>
<reference key="28">
    <citation type="journal article" date="2011" name="BMC Syst. Biol.">
        <title>Initial characterization of the human central proteome.</title>
        <authorList>
            <person name="Burkard T.R."/>
            <person name="Planyavsky M."/>
            <person name="Kaupe I."/>
            <person name="Breitwieser F.P."/>
            <person name="Buerckstuemmer T."/>
            <person name="Bennett K.L."/>
            <person name="Superti-Furga G."/>
            <person name="Colinge J."/>
        </authorList>
    </citation>
    <scope>IDENTIFICATION BY MASS SPECTROMETRY [LARGE SCALE ANALYSIS]</scope>
</reference>
<reference key="29">
    <citation type="journal article" date="2024" name="Nat. Struct. Mol. Biol.">
        <title>Mechanism of millisecond Lys48-linked poly-ubiquitin chain formation by cullin-RING ligases.</title>
        <authorList>
            <person name="Liwocha J."/>
            <person name="Li J."/>
            <person name="Purser N."/>
            <person name="Rattanasopa C."/>
            <person name="Maiwald S."/>
            <person name="Krist D.T."/>
            <person name="Scott D.C."/>
            <person name="Steigenberger B."/>
            <person name="Prabu J.R."/>
            <person name="Schulman B.A."/>
            <person name="Kleiger G."/>
        </authorList>
    </citation>
    <scope>FUNCTION</scope>
    <scope>CATALYTIC ACTIVITY</scope>
    <scope>BIOPHYSICOCHEMICAL PROPERTIES</scope>
    <scope>PATHWAY</scope>
    <scope>SUBUNIT</scope>
    <scope>MUTAGENESIS OF GLU-108 AND ARG-113</scope>
</reference>
<reference key="30">
    <citation type="submission" date="2009-02" db="PDB data bank">
        <title>Human ubiquitin-conjugating enzyme cdc34.</title>
        <authorList>
            <consortium name="Structural genomics consortium (SGC)"/>
        </authorList>
    </citation>
    <scope>X-RAY CRYSTALLOGRAPHY (2.4 ANGSTROMS) OF 7-184</scope>
</reference>
<reference evidence="32" key="31">
    <citation type="journal article" date="2011" name="Cell">
        <title>An allosteric inhibitor of the human Cdc34 ubiquitin-conjugating enzyme.</title>
        <authorList>
            <person name="Ceccarelli D.F."/>
            <person name="Tang X."/>
            <person name="Pelletier B."/>
            <person name="Orlicky S."/>
            <person name="Xie W."/>
            <person name="Plantevin V."/>
            <person name="Neculai D."/>
            <person name="Chou Y.C."/>
            <person name="Ogunjimi A."/>
            <person name="Al-Hakim A."/>
            <person name="Varelas X."/>
            <person name="Koszela J."/>
            <person name="Wasney G.A."/>
            <person name="Vedadi M."/>
            <person name="Dhe-Paganon S."/>
            <person name="Cox S."/>
            <person name="Xu S."/>
            <person name="Lopez-Girona A."/>
            <person name="Mercurio F."/>
            <person name="Wrana J."/>
            <person name="Durocher D."/>
            <person name="Meloche S."/>
            <person name="Webb D.R."/>
            <person name="Tyers M."/>
            <person name="Sicheri F."/>
        </authorList>
    </citation>
    <scope>X-RAY CRYSTALLOGRAPHY (2.30 ANGSTROMS) OF 7-184 IN COMPLEX WITH INHIBITOR 4,5-DIDEOXY-5-(3',5'-DICHLOROBIPHENYL-4-YL)-4-[(METHOXYACETYL)AMINO]-L-ARABINONIC ACID</scope>
</reference>
<reference evidence="31" key="32">
    <citation type="journal article" date="2012" name="Mol. Cell. Proteomics">
        <title>A human ubiquitin conjugating enzyme (E2)-HECT E3 ligase structure-function screen.</title>
        <authorList>
            <person name="Sheng Y."/>
            <person name="Hong J.H."/>
            <person name="Doherty R."/>
            <person name="Srikumar T."/>
            <person name="Shloush J."/>
            <person name="Avvakumov G.V."/>
            <person name="Walker J.R."/>
            <person name="Xue S."/>
            <person name="Neculai D."/>
            <person name="Wan J.W."/>
            <person name="Kim S.K."/>
            <person name="Arrowsmith C.H."/>
            <person name="Raught B."/>
            <person name="Dhe-Paganon S."/>
        </authorList>
    </citation>
    <scope>X-RAY CRYSTALLOGRAPHY (2.40 ANGSTROMS) OF 7-184</scope>
    <scope>FUNCTION</scope>
    <scope>AUTOUBIQUITINATION</scope>
</reference>
<reference evidence="33" key="33">
    <citation type="journal article" date="2014" name="Nat. Chem. Biol.">
        <title>E2 enzyme inhibition by stabilization of a low-affinity interface with ubiquitin.</title>
        <authorList>
            <person name="Huang H."/>
            <person name="Ceccarelli D.F."/>
            <person name="Orlicky S."/>
            <person name="St-Cyr D.J."/>
            <person name="Ziemba A."/>
            <person name="Garg P."/>
            <person name="Plamondon S."/>
            <person name="Auer M."/>
            <person name="Sidhu S."/>
            <person name="Marinier A."/>
            <person name="Kleiger G."/>
            <person name="Tyers M."/>
            <person name="Sicheri F."/>
        </authorList>
    </citation>
    <scope>X-RAY CRYSTALLOGRAPHY (2.61 ANGSTROMS) OF 7-184 IN COMPLEX WITH INHIBITOR 4,5-DIDEOXY-5-(3',5'-DICHLOROBIPHENYL-4-YL)-4-[(METHOXYACETYL)AMINO]-L-ARABINONIC ACID</scope>
    <scope>INTERACTION WITH RBX1</scope>
    <scope>MUTAGENESIS OF TYR-70; THR-117; SER-129 AND GLU-133</scope>
</reference>
<keyword id="KW-0002">3D-structure</keyword>
<keyword id="KW-0067">ATP-binding</keyword>
<keyword id="KW-0131">Cell cycle</keyword>
<keyword id="KW-0963">Cytoplasm</keyword>
<keyword id="KW-0547">Nucleotide-binding</keyword>
<keyword id="KW-0539">Nucleus</keyword>
<keyword id="KW-0597">Phosphoprotein</keyword>
<keyword id="KW-1267">Proteomics identification</keyword>
<keyword id="KW-1185">Reference proteome</keyword>
<keyword id="KW-0808">Transferase</keyword>
<keyword id="KW-0832">Ubl conjugation</keyword>
<keyword id="KW-0833">Ubl conjugation pathway</keyword>
<evidence type="ECO:0000250" key="1">
    <source>
        <dbReference type="UniProtKB" id="Q8CFI2"/>
    </source>
</evidence>
<evidence type="ECO:0000255" key="2">
    <source>
        <dbReference type="PROSITE-ProRule" id="PRU00388"/>
    </source>
</evidence>
<evidence type="ECO:0000255" key="3">
    <source>
        <dbReference type="PROSITE-ProRule" id="PRU10133"/>
    </source>
</evidence>
<evidence type="ECO:0000256" key="4">
    <source>
        <dbReference type="SAM" id="MobiDB-lite"/>
    </source>
</evidence>
<evidence type="ECO:0000269" key="5">
    <source>
    </source>
</evidence>
<evidence type="ECO:0000269" key="6">
    <source>
    </source>
</evidence>
<evidence type="ECO:0000269" key="7">
    <source>
    </source>
</evidence>
<evidence type="ECO:0000269" key="8">
    <source>
    </source>
</evidence>
<evidence type="ECO:0000269" key="9">
    <source>
    </source>
</evidence>
<evidence type="ECO:0000269" key="10">
    <source>
    </source>
</evidence>
<evidence type="ECO:0000269" key="11">
    <source>
    </source>
</evidence>
<evidence type="ECO:0000269" key="12">
    <source>
    </source>
</evidence>
<evidence type="ECO:0000269" key="13">
    <source>
    </source>
</evidence>
<evidence type="ECO:0000269" key="14">
    <source>
    </source>
</evidence>
<evidence type="ECO:0000269" key="15">
    <source>
    </source>
</evidence>
<evidence type="ECO:0000269" key="16">
    <source>
    </source>
</evidence>
<evidence type="ECO:0000269" key="17">
    <source>
    </source>
</evidence>
<evidence type="ECO:0000269" key="18">
    <source>
    </source>
</evidence>
<evidence type="ECO:0000269" key="19">
    <source>
    </source>
</evidence>
<evidence type="ECO:0000269" key="20">
    <source>
    </source>
</evidence>
<evidence type="ECO:0000269" key="21">
    <source>
    </source>
</evidence>
<evidence type="ECO:0000269" key="22">
    <source>
    </source>
</evidence>
<evidence type="ECO:0000269" key="23">
    <source>
    </source>
</evidence>
<evidence type="ECO:0000269" key="24">
    <source>
    </source>
</evidence>
<evidence type="ECO:0000269" key="25">
    <source>
    </source>
</evidence>
<evidence type="ECO:0000269" key="26">
    <source>
    </source>
</evidence>
<evidence type="ECO:0000269" key="27">
    <source>
    </source>
</evidence>
<evidence type="ECO:0000269" key="28">
    <source>
    </source>
</evidence>
<evidence type="ECO:0000269" key="29">
    <source ref="3"/>
</evidence>
<evidence type="ECO:0000305" key="30"/>
<evidence type="ECO:0007744" key="31">
    <source>
        <dbReference type="PDB" id="2OB4"/>
    </source>
</evidence>
<evidence type="ECO:0007744" key="32">
    <source>
        <dbReference type="PDB" id="3RZ3"/>
    </source>
</evidence>
<evidence type="ECO:0007744" key="33">
    <source>
        <dbReference type="PDB" id="4MDK"/>
    </source>
</evidence>
<evidence type="ECO:0007829" key="34">
    <source>
        <dbReference type="PDB" id="2OB4"/>
    </source>
</evidence>
<evidence type="ECO:0007829" key="35">
    <source>
        <dbReference type="PDB" id="3RZ3"/>
    </source>
</evidence>
<organism>
    <name type="scientific">Homo sapiens</name>
    <name type="common">Human</name>
    <dbReference type="NCBI Taxonomy" id="9606"/>
    <lineage>
        <taxon>Eukaryota</taxon>
        <taxon>Metazoa</taxon>
        <taxon>Chordata</taxon>
        <taxon>Craniata</taxon>
        <taxon>Vertebrata</taxon>
        <taxon>Euteleostomi</taxon>
        <taxon>Mammalia</taxon>
        <taxon>Eutheria</taxon>
        <taxon>Euarchontoglires</taxon>
        <taxon>Primates</taxon>
        <taxon>Haplorrhini</taxon>
        <taxon>Catarrhini</taxon>
        <taxon>Hominidae</taxon>
        <taxon>Homo</taxon>
    </lineage>
</organism>
<name>UB2R1_HUMAN</name>
<dbReference type="EC" id="2.3.2.23" evidence="14 19 24 25 28"/>
<dbReference type="EC" id="2.3.2.24" evidence="18"/>
<dbReference type="EMBL" id="L22005">
    <property type="protein sequence ID" value="AAC37534.1"/>
    <property type="status" value="ALT_INIT"/>
    <property type="molecule type" value="mRNA"/>
</dbReference>
<dbReference type="EMBL" id="BT006659">
    <property type="protein sequence ID" value="AAP35305.1"/>
    <property type="molecule type" value="mRNA"/>
</dbReference>
<dbReference type="EMBL" id="AY650399">
    <property type="protein sequence ID" value="AAT46688.1"/>
    <property type="molecule type" value="Genomic_DNA"/>
</dbReference>
<dbReference type="EMBL" id="AK291554">
    <property type="protein sequence ID" value="BAF84243.1"/>
    <property type="molecule type" value="mRNA"/>
</dbReference>
<dbReference type="EMBL" id="CH471242">
    <property type="protein sequence ID" value="EAW61190.1"/>
    <property type="molecule type" value="Genomic_DNA"/>
</dbReference>
<dbReference type="EMBL" id="BC009850">
    <property type="protein sequence ID" value="AAH09850.1"/>
    <property type="molecule type" value="mRNA"/>
</dbReference>
<dbReference type="EMBL" id="BC018143">
    <property type="protein sequence ID" value="AAH18143.1"/>
    <property type="molecule type" value="mRNA"/>
</dbReference>
<dbReference type="EMBL" id="BC023979">
    <property type="protein sequence ID" value="AAH23979.1"/>
    <property type="molecule type" value="mRNA"/>
</dbReference>
<dbReference type="CCDS" id="CCDS12030.1"/>
<dbReference type="PIR" id="A49630">
    <property type="entry name" value="A49630"/>
</dbReference>
<dbReference type="RefSeq" id="NP_004350.1">
    <property type="nucleotide sequence ID" value="NM_004359.2"/>
</dbReference>
<dbReference type="PDB" id="2OB4">
    <property type="method" value="X-ray"/>
    <property type="resolution" value="2.40 A"/>
    <property type="chains" value="A=7-184"/>
</dbReference>
<dbReference type="PDB" id="3RZ3">
    <property type="method" value="X-ray"/>
    <property type="resolution" value="2.30 A"/>
    <property type="chains" value="A/B/C/D=7-184"/>
</dbReference>
<dbReference type="PDB" id="4MDK">
    <property type="method" value="X-ray"/>
    <property type="resolution" value="2.61 A"/>
    <property type="chains" value="A/B/C/D=7-184"/>
</dbReference>
<dbReference type="PDB" id="7M2K">
    <property type="method" value="X-ray"/>
    <property type="resolution" value="2.47 A"/>
    <property type="chains" value="A/C/E/G=7-184"/>
</dbReference>
<dbReference type="PDB" id="8RX0">
    <property type="method" value="EM"/>
    <property type="resolution" value="3.70 A"/>
    <property type="chains" value="G=1-236"/>
</dbReference>
<dbReference type="PDBsum" id="2OB4"/>
<dbReference type="PDBsum" id="3RZ3"/>
<dbReference type="PDBsum" id="4MDK"/>
<dbReference type="PDBsum" id="7M2K"/>
<dbReference type="PDBsum" id="8RX0"/>
<dbReference type="SMR" id="P49427"/>
<dbReference type="BioGRID" id="107432">
    <property type="interactions" value="332"/>
</dbReference>
<dbReference type="CORUM" id="P49427"/>
<dbReference type="DIP" id="DIP-37783N"/>
<dbReference type="FunCoup" id="P49427">
    <property type="interactions" value="2477"/>
</dbReference>
<dbReference type="IntAct" id="P49427">
    <property type="interactions" value="29"/>
</dbReference>
<dbReference type="MINT" id="P49427"/>
<dbReference type="STRING" id="9606.ENSP00000215574"/>
<dbReference type="GlyCosmos" id="P49427">
    <property type="glycosylation" value="1 site, 1 glycan"/>
</dbReference>
<dbReference type="GlyGen" id="P49427">
    <property type="glycosylation" value="1 site, 1 O-linked glycan (1 site)"/>
</dbReference>
<dbReference type="iPTMnet" id="P49427"/>
<dbReference type="PhosphoSitePlus" id="P49427"/>
<dbReference type="SwissPalm" id="P49427"/>
<dbReference type="BioMuta" id="CDC34"/>
<dbReference type="DMDM" id="2507505"/>
<dbReference type="jPOST" id="P49427"/>
<dbReference type="MassIVE" id="P49427"/>
<dbReference type="PaxDb" id="9606-ENSP00000215574"/>
<dbReference type="PeptideAtlas" id="P49427"/>
<dbReference type="ProteomicsDB" id="56009"/>
<dbReference type="Pumba" id="P49427"/>
<dbReference type="Antibodypedia" id="1040">
    <property type="antibodies" value="374 antibodies from 36 providers"/>
</dbReference>
<dbReference type="CPTC" id="P49427">
    <property type="antibodies" value="2 antibodies"/>
</dbReference>
<dbReference type="DNASU" id="997"/>
<dbReference type="Ensembl" id="ENST00000215574.9">
    <property type="protein sequence ID" value="ENSP00000215574.2"/>
    <property type="gene ID" value="ENSG00000099804.9"/>
</dbReference>
<dbReference type="GeneID" id="997"/>
<dbReference type="KEGG" id="hsa:997"/>
<dbReference type="MANE-Select" id="ENST00000215574.9">
    <property type="protein sequence ID" value="ENSP00000215574.2"/>
    <property type="RefSeq nucleotide sequence ID" value="NM_004359.2"/>
    <property type="RefSeq protein sequence ID" value="NP_004350.1"/>
</dbReference>
<dbReference type="UCSC" id="uc002lov.4">
    <property type="organism name" value="human"/>
</dbReference>
<dbReference type="AGR" id="HGNC:1734"/>
<dbReference type="CTD" id="997"/>
<dbReference type="DisGeNET" id="997"/>
<dbReference type="GeneCards" id="CDC34"/>
<dbReference type="HGNC" id="HGNC:1734">
    <property type="gene designation" value="CDC34"/>
</dbReference>
<dbReference type="HPA" id="ENSG00000099804">
    <property type="expression patterns" value="Low tissue specificity"/>
</dbReference>
<dbReference type="MIM" id="116948">
    <property type="type" value="gene"/>
</dbReference>
<dbReference type="neXtProt" id="NX_P49427"/>
<dbReference type="OpenTargets" id="ENSG00000099804"/>
<dbReference type="PharmGKB" id="PA26265"/>
<dbReference type="VEuPathDB" id="HostDB:ENSG00000099804"/>
<dbReference type="eggNOG" id="KOG0425">
    <property type="taxonomic scope" value="Eukaryota"/>
</dbReference>
<dbReference type="GeneTree" id="ENSGT00940000160356"/>
<dbReference type="HOGENOM" id="CLU_030988_1_2_1"/>
<dbReference type="InParanoid" id="P49427"/>
<dbReference type="OMA" id="VNSCYGD"/>
<dbReference type="OrthoDB" id="19692at2759"/>
<dbReference type="PAN-GO" id="P49427">
    <property type="GO annotations" value="3 GO annotations based on evolutionary models"/>
</dbReference>
<dbReference type="PhylomeDB" id="P49427"/>
<dbReference type="TreeFam" id="TF101107"/>
<dbReference type="BRENDA" id="2.3.2.23">
    <property type="organism ID" value="2681"/>
</dbReference>
<dbReference type="BRENDA" id="2.3.2.24">
    <property type="organism ID" value="2681"/>
</dbReference>
<dbReference type="PathwayCommons" id="P49427"/>
<dbReference type="Reactome" id="R-HSA-202424">
    <property type="pathway name" value="Downstream TCR signaling"/>
</dbReference>
<dbReference type="Reactome" id="R-HSA-2871837">
    <property type="pathway name" value="FCERI mediated NF-kB activation"/>
</dbReference>
<dbReference type="Reactome" id="R-HSA-5607764">
    <property type="pathway name" value="CLEC7A (Dectin-1) signaling"/>
</dbReference>
<dbReference type="Reactome" id="R-HSA-8866652">
    <property type="pathway name" value="Synthesis of active ubiquitin: roles of E1 and E2 enzymes"/>
</dbReference>
<dbReference type="Reactome" id="R-HSA-983168">
    <property type="pathway name" value="Antigen processing: Ubiquitination &amp; Proteasome degradation"/>
</dbReference>
<dbReference type="SignaLink" id="P49427"/>
<dbReference type="SIGNOR" id="P49427"/>
<dbReference type="UniPathway" id="UPA00143"/>
<dbReference type="BioGRID-ORCS" id="997">
    <property type="hits" value="22 hits in 1165 CRISPR screens"/>
</dbReference>
<dbReference type="ChiTaRS" id="CDC34">
    <property type="organism name" value="human"/>
</dbReference>
<dbReference type="EvolutionaryTrace" id="P49427"/>
<dbReference type="GeneWiki" id="CDC34"/>
<dbReference type="GenomeRNAi" id="997"/>
<dbReference type="Pharos" id="P49427">
    <property type="development level" value="Tbio"/>
</dbReference>
<dbReference type="PRO" id="PR:P49427"/>
<dbReference type="Proteomes" id="UP000005640">
    <property type="component" value="Chromosome 19"/>
</dbReference>
<dbReference type="RNAct" id="P49427">
    <property type="molecule type" value="protein"/>
</dbReference>
<dbReference type="Bgee" id="ENSG00000099804">
    <property type="expression patterns" value="Expressed in left testis and 191 other cell types or tissues"/>
</dbReference>
<dbReference type="ExpressionAtlas" id="P49427">
    <property type="expression patterns" value="baseline and differential"/>
</dbReference>
<dbReference type="GO" id="GO:0005829">
    <property type="term" value="C:cytosol"/>
    <property type="evidence" value="ECO:0000314"/>
    <property type="project" value="HPA"/>
</dbReference>
<dbReference type="GO" id="GO:0016607">
    <property type="term" value="C:nuclear speck"/>
    <property type="evidence" value="ECO:0000314"/>
    <property type="project" value="HPA"/>
</dbReference>
<dbReference type="GO" id="GO:0005654">
    <property type="term" value="C:nucleoplasm"/>
    <property type="evidence" value="ECO:0000304"/>
    <property type="project" value="Reactome"/>
</dbReference>
<dbReference type="GO" id="GO:0005634">
    <property type="term" value="C:nucleus"/>
    <property type="evidence" value="ECO:0000303"/>
    <property type="project" value="UniProtKB"/>
</dbReference>
<dbReference type="GO" id="GO:0005524">
    <property type="term" value="F:ATP binding"/>
    <property type="evidence" value="ECO:0007669"/>
    <property type="project" value="UniProtKB-KW"/>
</dbReference>
<dbReference type="GO" id="GO:0061631">
    <property type="term" value="F:ubiquitin conjugating enzyme activity"/>
    <property type="evidence" value="ECO:0000314"/>
    <property type="project" value="MGI"/>
</dbReference>
<dbReference type="GO" id="GO:0004842">
    <property type="term" value="F:ubiquitin-protein transferase activity"/>
    <property type="evidence" value="ECO:0000314"/>
    <property type="project" value="UniProtKB"/>
</dbReference>
<dbReference type="GO" id="GO:0035458">
    <property type="term" value="P:cellular response to interferon-beta"/>
    <property type="evidence" value="ECO:0000315"/>
    <property type="project" value="UniProtKB"/>
</dbReference>
<dbReference type="GO" id="GO:0006270">
    <property type="term" value="P:DNA replication initiation"/>
    <property type="evidence" value="ECO:0000303"/>
    <property type="project" value="UniProtKB"/>
</dbReference>
<dbReference type="GO" id="GO:0000082">
    <property type="term" value="P:G1/S transition of mitotic cell cycle"/>
    <property type="evidence" value="ECO:0000303"/>
    <property type="project" value="UniProtKB"/>
</dbReference>
<dbReference type="GO" id="GO:0043161">
    <property type="term" value="P:proteasome-mediated ubiquitin-dependent protein catabolic process"/>
    <property type="evidence" value="ECO:0000314"/>
    <property type="project" value="UniProtKB"/>
</dbReference>
<dbReference type="GO" id="GO:0070936">
    <property type="term" value="P:protein K48-linked ubiquitination"/>
    <property type="evidence" value="ECO:0000314"/>
    <property type="project" value="UniProtKB"/>
</dbReference>
<dbReference type="GO" id="GO:0036211">
    <property type="term" value="P:protein modification process"/>
    <property type="evidence" value="ECO:0000303"/>
    <property type="project" value="UniProtKB"/>
</dbReference>
<dbReference type="GO" id="GO:0000209">
    <property type="term" value="P:protein polyubiquitination"/>
    <property type="evidence" value="ECO:0000314"/>
    <property type="project" value="UniProtKB"/>
</dbReference>
<dbReference type="GO" id="GO:0016567">
    <property type="term" value="P:protein ubiquitination"/>
    <property type="evidence" value="ECO:0000314"/>
    <property type="project" value="UniProtKB"/>
</dbReference>
<dbReference type="GO" id="GO:0006511">
    <property type="term" value="P:ubiquitin-dependent protein catabolic process"/>
    <property type="evidence" value="ECO:0000318"/>
    <property type="project" value="GO_Central"/>
</dbReference>
<dbReference type="CDD" id="cd23803">
    <property type="entry name" value="UBCc_UBE2R"/>
    <property type="match status" value="1"/>
</dbReference>
<dbReference type="DisProt" id="DP02094"/>
<dbReference type="FunFam" id="3.10.110.10:FF:000009">
    <property type="entry name" value="Ubiquitin-conjugating enzyme E2 R2"/>
    <property type="match status" value="1"/>
</dbReference>
<dbReference type="Gene3D" id="3.10.110.10">
    <property type="entry name" value="Ubiquitin Conjugating Enzyme"/>
    <property type="match status" value="1"/>
</dbReference>
<dbReference type="InterPro" id="IPR050113">
    <property type="entry name" value="Ub_conjugating_enzyme"/>
</dbReference>
<dbReference type="InterPro" id="IPR000608">
    <property type="entry name" value="UBQ-conjugat_E2_core"/>
</dbReference>
<dbReference type="InterPro" id="IPR023313">
    <property type="entry name" value="UBQ-conjugating_AS"/>
</dbReference>
<dbReference type="InterPro" id="IPR016135">
    <property type="entry name" value="UBQ-conjugating_enzyme/RWD"/>
</dbReference>
<dbReference type="PANTHER" id="PTHR24067">
    <property type="entry name" value="UBIQUITIN-CONJUGATING ENZYME E2"/>
    <property type="match status" value="1"/>
</dbReference>
<dbReference type="Pfam" id="PF00179">
    <property type="entry name" value="UQ_con"/>
    <property type="match status" value="1"/>
</dbReference>
<dbReference type="SMART" id="SM00212">
    <property type="entry name" value="UBCc"/>
    <property type="match status" value="1"/>
</dbReference>
<dbReference type="SUPFAM" id="SSF54495">
    <property type="entry name" value="UBC-like"/>
    <property type="match status" value="1"/>
</dbReference>
<dbReference type="PROSITE" id="PS00183">
    <property type="entry name" value="UBC_1"/>
    <property type="match status" value="1"/>
</dbReference>
<dbReference type="PROSITE" id="PS50127">
    <property type="entry name" value="UBC_2"/>
    <property type="match status" value="1"/>
</dbReference>
<gene>
    <name type="primary">CDC34</name>
    <name type="synonym">UBCH3</name>
    <name type="synonym">UBE2R1</name>
</gene>
<feature type="chain" id="PRO_0000082451" description="Ubiquitin-conjugating enzyme E2 R1">
    <location>
        <begin position="1"/>
        <end position="236"/>
    </location>
</feature>
<feature type="domain" description="UBC core" evidence="2">
    <location>
        <begin position="8"/>
        <end position="174"/>
    </location>
</feature>
<feature type="region of interest" description="Important for ubiquitin transfer" evidence="28">
    <location>
        <begin position="98"/>
        <end position="113"/>
    </location>
</feature>
<feature type="region of interest" description="SCF-binding">
    <location>
        <begin position="190"/>
        <end position="236"/>
    </location>
</feature>
<feature type="region of interest" description="Disordered" evidence="4">
    <location>
        <begin position="216"/>
        <end position="236"/>
    </location>
</feature>
<feature type="active site" description="Glycyl thioester intermediate" evidence="2">
    <location>
        <position position="93"/>
    </location>
</feature>
<feature type="modified residue" description="Phosphoserine; by CK2" evidence="11 17">
    <location>
        <position position="203"/>
    </location>
</feature>
<feature type="modified residue" description="Phosphoserine; by CK2" evidence="11 17">
    <location>
        <position position="222"/>
    </location>
</feature>
<feature type="modified residue" description="Phosphoserine; by CK2" evidence="11 14 17">
    <location>
        <position position="231"/>
    </location>
</feature>
<feature type="modified residue" description="Phosphothreonine; by CK2" evidence="11">
    <location>
        <position position="233"/>
    </location>
</feature>
<feature type="modified residue" description="Phosphoserine; by CK2" evidence="11">
    <location>
        <position position="236"/>
    </location>
</feature>
<feature type="sequence variant" id="VAR_021277" description="In dbSNP:rs16990650." evidence="29">
    <original>D</original>
    <variation>H</variation>
    <location>
        <position position="227"/>
    </location>
</feature>
<feature type="mutagenesis site" description="Loss of RBX1-binding." evidence="27">
    <original>Y</original>
    <variation>R</variation>
    <location>
        <position position="70"/>
    </location>
</feature>
<feature type="mutagenesis site" description="Inhibits both mono and polyubiquitination of NFKBIA." evidence="19">
    <original>N</original>
    <variation>Q</variation>
    <location>
        <position position="85"/>
    </location>
</feature>
<feature type="mutagenesis site" description="Decreases polyubiquitination of NFKBIA." evidence="19">
    <original>Y</original>
    <variation>A</variation>
    <location>
        <position position="87"/>
    </location>
</feature>
<feature type="mutagenesis site" description="Loss of function." evidence="5 14">
    <original>C</original>
    <variation>S</variation>
    <variation>A</variation>
    <location>
        <position position="93"/>
    </location>
</feature>
<feature type="mutagenesis site" description="Inhibits both mono and polyubiquitination of NFKBIA." evidence="19">
    <original>S</original>
    <variation>D</variation>
    <location>
        <position position="95"/>
    </location>
</feature>
<feature type="mutagenesis site" description="Loss of function." evidence="14">
    <original>L</original>
    <variation>S</variation>
    <location>
        <position position="97"/>
    </location>
</feature>
<feature type="mutagenesis site" description="Inhibits polyubiquitination of NFKBIA; when associated with A-103." evidence="19">
    <original>D</original>
    <variation>A</variation>
    <location>
        <position position="102"/>
    </location>
</feature>
<feature type="mutagenesis site" description="Inhibits polyubiquitination of NFKBIA; when associated with A-102." evidence="19">
    <original>D</original>
    <variation>A</variation>
    <location>
        <position position="103"/>
    </location>
</feature>
<feature type="mutagenesis site" description="Decrease in substrate affinity and ubiquitin transfer rate for neddylated CRL2(FEM1C)-UBE2R1 complex. Inhibits both mono and polyubiquitination of NFKBIA; when associated with A-112." evidence="19 28">
    <original>E</original>
    <variation>A</variation>
    <location>
        <position position="108"/>
    </location>
</feature>
<feature type="mutagenesis site" description="Inhibits both mono and polyubiquitination of NFKBIA; when associated with A-108." evidence="19">
    <original>E</original>
    <variation>A</variation>
    <location>
        <position position="112"/>
    </location>
</feature>
<feature type="mutagenesis site" description="Decrease in substrate affinity and ubiquitin transfer rate for neddylated CRL2(FEM1C)-UBE2R1 complex." evidence="28">
    <original>R</original>
    <variation>A</variation>
    <location>
        <position position="113"/>
    </location>
</feature>
<feature type="mutagenesis site" description="Loss of RBX1-binding." evidence="27">
    <original>T</original>
    <variation>E</variation>
    <location>
        <position position="117"/>
    </location>
</feature>
<feature type="mutagenesis site" description="No effect on activity, when assayed in a Sic1-SCF-cdc4 ubiquitination assay." evidence="27">
    <original>S</original>
    <variation>L</variation>
    <location>
        <position position="129"/>
    </location>
</feature>
<feature type="mutagenesis site" description="Complete loss of activity, when assayed in a Sic1-SCF-cdc4 ubiquitination assay." evidence="27">
    <original>S</original>
    <variation>R</variation>
    <location>
        <position position="129"/>
    </location>
</feature>
<feature type="mutagenesis site" description="No effect on activity, when assayed in a Sic1-SCF-cdc4 ubiquitination assay." evidence="27">
    <original>E</original>
    <variation>R</variation>
    <location>
        <position position="133"/>
    </location>
</feature>
<feature type="mutagenesis site" description="Decreases monoubiquitination of NFKBIA and inhibits polyubiquitination of NFKBIA." evidence="19">
    <original>S</original>
    <variation>A</variation>
    <location>
        <position position="138"/>
    </location>
</feature>
<feature type="mutagenesis site" description="Inhibits polyubiquitination of NFKBIA; when associated with A-147; A-149; A-150 and A-153." evidence="19">
    <original>D</original>
    <variation>A</variation>
    <location>
        <position position="143"/>
    </location>
</feature>
<feature type="mutagenesis site" description="Inhibits polyubiquitination of NFKBIA; when associated with A-143; A-149; A-150 and A-153." evidence="19">
    <original>M</original>
    <variation>A</variation>
    <location>
        <position position="147"/>
    </location>
</feature>
<feature type="mutagenesis site" description="Inhibits polyubiquitination of NFKBIA; when associated with A-147; A-147; A-150 and A-153." evidence="19">
    <original>R</original>
    <variation>A</variation>
    <location>
        <position position="149"/>
    </location>
</feature>
<feature type="mutagenesis site" description="Inhibits polyubiquitination of NFKBIA; when associated with A-143; A-147; A-149 and A-153." evidence="19">
    <original>K</original>
    <variation>A</variation>
    <location>
        <position position="150"/>
    </location>
</feature>
<feature type="mutagenesis site" description="Inhibits polyubiquitination of NFKBIA; when associated with A-143; A-147; A-149 and A-150." evidence="19">
    <original>E</original>
    <variation>A</variation>
    <location>
        <position position="153"/>
    </location>
</feature>
<feature type="mutagenesis site" description="Abolishes phosphorylation by CK2. Impairs nuclear localization; when associated with A-222; A-231; A-233 and A-236." evidence="11">
    <original>S</original>
    <variation>A</variation>
    <location>
        <position position="203"/>
    </location>
</feature>
<feature type="mutagenesis site" description="Abolishes phosphorylation by CK2. Impairs nuclear localization; when associated with A-203; A-231; A-233 and A-236." evidence="11">
    <original>S</original>
    <variation>A</variation>
    <location>
        <position position="222"/>
    </location>
</feature>
<feature type="mutagenesis site" description="Abolishes phosphorylation by CK2. Impairs nuclear localization; when associated with A-203; A-222; A-233 and A-236." evidence="11 14">
    <original>S</original>
    <variation>A</variation>
    <location>
        <position position="231"/>
    </location>
</feature>
<feature type="mutagenesis site" description="Abolishes phosphorylation by CK2. Impairs nuclear localization; when associated with A-203; A-222; A-231 and A-236." evidence="11">
    <original>T</original>
    <variation>A</variation>
    <location>
        <position position="233"/>
    </location>
</feature>
<feature type="mutagenesis site" description="Abolishes phosphorylation by CK2. Impairs nuclear localization; when associated with A-203; A-222; A-231 and A-233." evidence="11">
    <original>S</original>
    <variation>A</variation>
    <location>
        <position position="236"/>
    </location>
</feature>
<feature type="helix" evidence="35">
    <location>
        <begin position="8"/>
        <end position="22"/>
    </location>
</feature>
<feature type="strand" evidence="35">
    <location>
        <begin position="28"/>
        <end position="32"/>
    </location>
</feature>
<feature type="strand" evidence="35">
    <location>
        <begin position="40"/>
        <end position="46"/>
    </location>
</feature>
<feature type="turn" evidence="35">
    <location>
        <begin position="52"/>
        <end position="55"/>
    </location>
</feature>
<feature type="strand" evidence="35">
    <location>
        <begin position="57"/>
        <end position="63"/>
    </location>
</feature>
<feature type="turn" evidence="35">
    <location>
        <begin position="66"/>
        <end position="69"/>
    </location>
</feature>
<feature type="strand" evidence="35">
    <location>
        <begin position="74"/>
        <end position="79"/>
    </location>
</feature>
<feature type="strand" evidence="35">
    <location>
        <begin position="90"/>
        <end position="92"/>
    </location>
</feature>
<feature type="helix" evidence="34">
    <location>
        <begin position="94"/>
        <end position="97"/>
    </location>
</feature>
<feature type="helix" evidence="35">
    <location>
        <begin position="120"/>
        <end position="132"/>
    </location>
</feature>
<feature type="helix" evidence="35">
    <location>
        <begin position="142"/>
        <end position="153"/>
    </location>
</feature>
<feature type="turn" evidence="35">
    <location>
        <begin position="154"/>
        <end position="156"/>
    </location>
</feature>
<feature type="helix" evidence="35">
    <location>
        <begin position="160"/>
        <end position="178"/>
    </location>
</feature>
<sequence length="236" mass="26737">MARPLVPSSQKALLLELKGLQEEPVEGFRVTLVDEGDLYNWEVAIFGPPNTYYEGGYFKARLKFPIDYPYSPPAFRFLTKMWHPNIYETGDVCISILHPPVDDPQSGELPSERWNPTQNVRTILLSVISLLNEPNTFSPANVDASVMYRKWKESKGKDREYTDIIRKQVLGTKVDAERDGVKVPTTLAEYCVKTKAPAPDEGSDLFYDDYYEDGEVEEEADSCFGDDEDDSGTEES</sequence>
<comment type="function">
    <text evidence="5 8 9 13 14 15 16 18 19 21 22 24 26 28">E2 ubiquitin-conjugating enzyme that accepts ubiquitin from an E1 ubiquitin-activating protein, and catalyzes its covalent attachment to other proteins by an E3 ubiquitin-protein ligase complex (PubMed:10329681, PubMed:17588522, PubMed:20061386, PubMed:38326650). In vitro catalyzes 'Lys-48'-linked polyubiquitination (PubMed:22496338). Cooperates with the E2 UBCH5C and the SCF(FBXW11) E3 ligase complex for the polyubiquitination of NFKBIA leading to its subsequent proteasomal degradation (PubMed:10329681, PubMed:10918611, PubMed:17698585). Performs ubiquitin chain elongation building ubiquitin chains from the UBE2D3-primed NFKBIA-linked ubiquitin. UBE2D3 acts as an initiator E2, priming the phosphorylated NFKBIA target at positions 'Lys-21' and/or 'Lys-22' with a monoubiquitin. Cooperates with the SCF(SKP2) E3 ligase complex to regulate cell proliferation through ubiquitination and degradation of MYBL2 and KIP1 (PubMed:10871850, PubMed:15652359, PubMed:19112177). Involved in ubiquitin conjugation and degradation of CREM isoform ICERIIgamma and ATF15 resulting in abrogation of ICERIIgamma- and ATF5-mediated repression of cAMP-induced transcription during both meiotic and mitotic cell cycles. Involved in the regulation of the cell cycle G2/M phase through its targeting of the WEE1 kinase for ubiquitination and degradation (PubMed:19126550). Also involved in the degradation of beta-catenin (PubMed:12037680). Is target of human herpes virus 1 protein ICP0, leading to ICP0-dependent dynamic interaction with proteasomes (PubMed:11805320, PubMed:12060736).</text>
</comment>
<comment type="catalytic activity">
    <reaction evidence="2 3 14 19 24 25 28">
        <text>S-ubiquitinyl-[E1 ubiquitin-activating enzyme]-L-cysteine + [E2 ubiquitin-conjugating enzyme]-L-cysteine = [E1 ubiquitin-activating enzyme]-L-cysteine + S-ubiquitinyl-[E2 ubiquitin-conjugating enzyme]-L-cysteine.</text>
        <dbReference type="EC" id="2.3.2.23"/>
    </reaction>
</comment>
<comment type="catalytic activity">
    <reaction evidence="18">
        <text>S-ubiquitinyl-[E1 ubiquitin-activating enzyme]-L-cysteine + [acceptor protein]-L-lysine = [E1 ubiquitin-activating enzyme]-L-cysteine + N(6)-monoubiquitinyl-[acceptor protein]-L-lysine.</text>
        <dbReference type="EC" id="2.3.2.24"/>
    </reaction>
</comment>
<comment type="activity regulation">
    <text evidence="12">CDC34-catalyzed polyubiquitin chain assembly activity is stimulated by the conjugation of NEDD8 to the CUL1 SCF E3 ligase complex subunit.</text>
</comment>
<comment type="biophysicochemical properties">
    <kinetics>
        <KM evidence="23">0.11 uM for beta-catenin-monoubiquitin</KM>
        <KM evidence="28">111 uM for acceptor ubiquitin</KM>
        <text evidence="28">Measured for E2-E3 complex composed of neddylated UBE2R1 and the CRL2(FEM1C) complex, using an 'Arg-48' donor ubiquitin.</text>
    </kinetics>
</comment>
<comment type="pathway">
    <text evidence="28">Protein modification; protein ubiquitination.</text>
</comment>
<comment type="subunit">
    <text evidence="1 9 10 11 12 13 14 15 20 21 23 27">Interacts with multiple Cul1-RING E3 ubiquitin-protein ligase complexes, also known as SCF (SKP1-CUL1-F-box protein) complexes (PubMed:10918611, PubMed:11675391, PubMed:18851830, PubMed:19112177, PubMed:19945379, PubMed:24316736). Identified in a SCF E3 ubiquitin ligase complex together with HINT1 and RBX1 (PubMed:19112177). When cullin is neddylated, the interaction between the E2 and the SCF complex is strengthened (PubMed:10918611, PubMed:11675391, PubMed:18851830, PubMed:19112177, PubMed:19945379, PubMed:24316736). Interacts with multiple Cul2-RING (CRL2) E3 ubiquitin-protein ligase complexes, also known as ECS (Elongin BC-CUL2/5-SOCS-box protein) complexes (PubMed:38326650). When phosphorylated, interacts with beta-TrCP (BTRC) (PubMed:12037680). Interacts with human herpes virus 1 protein ICP0 and associates with the proteasome for degradation (PubMed:11447293, PubMed:11805320, PubMed:12060736). Interacts with casein kinase subunit CSNK2B (PubMed:11546811). Interacts with CNTD1; this interaction regulates the cell-cycle progression (By similarity).</text>
</comment>
<comment type="interaction">
    <interactant intactId="EBI-975634">
        <id>P49427</id>
    </interactant>
    <interactant intactId="EBI-359390">
        <id>Q13616</id>
        <label>CUL1</label>
    </interactant>
    <organismsDiffer>false</organismsDiffer>
    <experiments>3</experiments>
</comment>
<comment type="interaction">
    <interactant intactId="EBI-975634">
        <id>P49427</id>
    </interactant>
    <interactant intactId="EBI-2864512">
        <id>P50221</id>
        <label>MEOX1</label>
    </interactant>
    <organismsDiffer>false</organismsDiffer>
    <experiments>3</experiments>
</comment>
<comment type="interaction">
    <interactant intactId="EBI-975634">
        <id>P49427</id>
    </interactant>
    <interactant intactId="EBI-16439278">
        <id>Q6FHY5</id>
        <label>MEOX2</label>
    </interactant>
    <organismsDiffer>false</organismsDiffer>
    <experiments>3</experiments>
</comment>
<comment type="interaction">
    <interactant intactId="EBI-975634">
        <id>P49427</id>
    </interactant>
    <interactant intactId="EBI-727004">
        <id>O00560</id>
        <label>SDCBP</label>
    </interactant>
    <organismsDiffer>false</organismsDiffer>
    <experiments>6</experiments>
</comment>
<comment type="interaction">
    <interactant intactId="EBI-975634">
        <id>P49427</id>
    </interactant>
    <interactant intactId="EBI-747107">
        <id>Q8IUQ4</id>
        <label>SIAH1</label>
    </interactant>
    <organismsDiffer>false</organismsDiffer>
    <experiments>3</experiments>
</comment>
<comment type="subcellular location">
    <subcellularLocation>
        <location>Cytoplasm</location>
    </subcellularLocation>
    <subcellularLocation>
        <location>Nucleus</location>
    </subcellularLocation>
    <text>The phosphorylation of the C-terminal tail plays an important role in mediating nuclear localization. Colocalizes with beta-tubulin on mitotic spindles in anaphase.</text>
</comment>
<comment type="tissue specificity">
    <text evidence="6">Expressed in testes during spermatogenesis to regulate repression of cAMP-induced transcription.</text>
</comment>
<comment type="induction">
    <text evidence="22">Negatively regulated by the let-7 microRNA.</text>
</comment>
<comment type="domain">
    <text evidence="7 23">The C-terminal acidic tail is required for nuclear localization and is involved in the binding to SCF E3 ligase complexes, and more specifically with the CUL1 subunit.</text>
</comment>
<comment type="PTM">
    <text evidence="13 15 26">Autoubiquitinated (PubMed:11805320, PubMed:12060736, PubMed:22496338). Autoubiquitination is promoted by the human herpes virus 1 protein ICP0 and leads to degradation by the Ubiquitin-proteasomal pathway (PubMed:11805320, PubMed:12060736).</text>
</comment>
<comment type="PTM">
    <text evidence="11 14 17">Phosphorylated by CK2. Phosphorylation of the C-terminal tail by CK2 controls the nuclear localization.</text>
</comment>
<comment type="similarity">
    <text evidence="2">Belongs to the ubiquitin-conjugating enzyme family.</text>
</comment>
<comment type="sequence caution" evidence="30">
    <conflict type="erroneous initiation">
        <sequence resource="EMBL-CDS" id="AAC37534"/>
    </conflict>
</comment>